<feature type="chain" id="PRO_1000143228" description="Small ribosomal subunit protein uS17">
    <location>
        <begin position="1"/>
        <end position="84"/>
    </location>
</feature>
<accession>B5RPJ1</accession>
<organism>
    <name type="scientific">Borrelia recurrentis (strain A1)</name>
    <dbReference type="NCBI Taxonomy" id="412418"/>
    <lineage>
        <taxon>Bacteria</taxon>
        <taxon>Pseudomonadati</taxon>
        <taxon>Spirochaetota</taxon>
        <taxon>Spirochaetia</taxon>
        <taxon>Spirochaetales</taxon>
        <taxon>Borreliaceae</taxon>
        <taxon>Borrelia</taxon>
    </lineage>
</organism>
<name>RS17_BORRA</name>
<dbReference type="EMBL" id="CP000993">
    <property type="protein sequence ID" value="ACH94725.1"/>
    <property type="molecule type" value="Genomic_DNA"/>
</dbReference>
<dbReference type="RefSeq" id="WP_012538938.1">
    <property type="nucleotide sequence ID" value="NC_011244.1"/>
</dbReference>
<dbReference type="SMR" id="B5RPJ1"/>
<dbReference type="KEGG" id="bre:BRE_493"/>
<dbReference type="HOGENOM" id="CLU_073626_1_0_12"/>
<dbReference type="Proteomes" id="UP000000612">
    <property type="component" value="Chromosome"/>
</dbReference>
<dbReference type="GO" id="GO:0022627">
    <property type="term" value="C:cytosolic small ribosomal subunit"/>
    <property type="evidence" value="ECO:0007669"/>
    <property type="project" value="TreeGrafter"/>
</dbReference>
<dbReference type="GO" id="GO:0019843">
    <property type="term" value="F:rRNA binding"/>
    <property type="evidence" value="ECO:0007669"/>
    <property type="project" value="UniProtKB-UniRule"/>
</dbReference>
<dbReference type="GO" id="GO:0003735">
    <property type="term" value="F:structural constituent of ribosome"/>
    <property type="evidence" value="ECO:0007669"/>
    <property type="project" value="InterPro"/>
</dbReference>
<dbReference type="GO" id="GO:0006412">
    <property type="term" value="P:translation"/>
    <property type="evidence" value="ECO:0007669"/>
    <property type="project" value="UniProtKB-UniRule"/>
</dbReference>
<dbReference type="CDD" id="cd00364">
    <property type="entry name" value="Ribosomal_uS17"/>
    <property type="match status" value="1"/>
</dbReference>
<dbReference type="Gene3D" id="2.40.50.140">
    <property type="entry name" value="Nucleic acid-binding proteins"/>
    <property type="match status" value="1"/>
</dbReference>
<dbReference type="HAMAP" id="MF_01345_B">
    <property type="entry name" value="Ribosomal_uS17_B"/>
    <property type="match status" value="1"/>
</dbReference>
<dbReference type="InterPro" id="IPR012340">
    <property type="entry name" value="NA-bd_OB-fold"/>
</dbReference>
<dbReference type="InterPro" id="IPR000266">
    <property type="entry name" value="Ribosomal_uS17"/>
</dbReference>
<dbReference type="InterPro" id="IPR019984">
    <property type="entry name" value="Ribosomal_uS17_bact/chlr"/>
</dbReference>
<dbReference type="InterPro" id="IPR019979">
    <property type="entry name" value="Ribosomal_uS17_CS"/>
</dbReference>
<dbReference type="NCBIfam" id="NF004123">
    <property type="entry name" value="PRK05610.1"/>
    <property type="match status" value="1"/>
</dbReference>
<dbReference type="NCBIfam" id="TIGR03635">
    <property type="entry name" value="uS17_bact"/>
    <property type="match status" value="1"/>
</dbReference>
<dbReference type="PANTHER" id="PTHR10744">
    <property type="entry name" value="40S RIBOSOMAL PROTEIN S11 FAMILY MEMBER"/>
    <property type="match status" value="1"/>
</dbReference>
<dbReference type="PANTHER" id="PTHR10744:SF1">
    <property type="entry name" value="SMALL RIBOSOMAL SUBUNIT PROTEIN US17M"/>
    <property type="match status" value="1"/>
</dbReference>
<dbReference type="Pfam" id="PF00366">
    <property type="entry name" value="Ribosomal_S17"/>
    <property type="match status" value="1"/>
</dbReference>
<dbReference type="PRINTS" id="PR00973">
    <property type="entry name" value="RIBOSOMALS17"/>
</dbReference>
<dbReference type="SUPFAM" id="SSF50249">
    <property type="entry name" value="Nucleic acid-binding proteins"/>
    <property type="match status" value="1"/>
</dbReference>
<dbReference type="PROSITE" id="PS00056">
    <property type="entry name" value="RIBOSOMAL_S17"/>
    <property type="match status" value="1"/>
</dbReference>
<proteinExistence type="inferred from homology"/>
<reference key="1">
    <citation type="journal article" date="2008" name="PLoS Genet.">
        <title>The genome of Borrelia recurrentis, the agent of deadly louse-borne relapsing fever, is a degraded subset of tick-borne Borrelia duttonii.</title>
        <authorList>
            <person name="Lescot M."/>
            <person name="Audic S."/>
            <person name="Robert C."/>
            <person name="Nguyen T.T."/>
            <person name="Blanc G."/>
            <person name="Cutler S.J."/>
            <person name="Wincker P."/>
            <person name="Couloux A."/>
            <person name="Claverie J.-M."/>
            <person name="Raoult D."/>
            <person name="Drancourt M."/>
        </authorList>
    </citation>
    <scope>NUCLEOTIDE SEQUENCE [LARGE SCALE GENOMIC DNA]</scope>
    <source>
        <strain>A1</strain>
    </source>
</reference>
<keyword id="KW-0687">Ribonucleoprotein</keyword>
<keyword id="KW-0689">Ribosomal protein</keyword>
<keyword id="KW-0694">RNA-binding</keyword>
<keyword id="KW-0699">rRNA-binding</keyword>
<evidence type="ECO:0000255" key="1">
    <source>
        <dbReference type="HAMAP-Rule" id="MF_01345"/>
    </source>
</evidence>
<evidence type="ECO:0000305" key="2"/>
<comment type="function">
    <text evidence="1">One of the primary rRNA binding proteins, it binds specifically to the 5'-end of 16S ribosomal RNA.</text>
</comment>
<comment type="subunit">
    <text evidence="1">Part of the 30S ribosomal subunit.</text>
</comment>
<comment type="similarity">
    <text evidence="1">Belongs to the universal ribosomal protein uS17 family.</text>
</comment>
<sequence>MARENKKELIGKVVSDKMSKTVVVEIVQRKMHPIYHKYLKVSRRVKAHDEREESKLGDKVKIVESRPISKEKRWRLVEILERSK</sequence>
<protein>
    <recommendedName>
        <fullName evidence="1">Small ribosomal subunit protein uS17</fullName>
    </recommendedName>
    <alternativeName>
        <fullName evidence="2">30S ribosomal protein S17</fullName>
    </alternativeName>
</protein>
<gene>
    <name evidence="1" type="primary">rpsQ</name>
    <name type="ordered locus">BRE_493</name>
</gene>